<protein>
    <recommendedName>
        <fullName>UPF0758 protein LCA_0852</fullName>
    </recommendedName>
</protein>
<comment type="similarity">
    <text evidence="2">Belongs to the UPF0758 family.</text>
</comment>
<sequence length="224" mass="25084">MLTSQSKLQPREQVALYGAASLSDEQLATVILRSGTQHLPVEVVAQRLLQRYPDFQDLEQADLVQLRQIEGIGPVKAIELQAICELSRRIQNQRTLRFGVVASSQMVGQRMIESLAGETQEQLLAVYLDVKNQIIQIKQLYLGTLNSSVAHPREVFKWAVQYSAAKFILVHNHPSGQLAPSTQDINFTKRIVNCGQLMGITCLDHLIIGSSQYLSLREEGYLVD</sequence>
<reference key="1">
    <citation type="journal article" date="2005" name="Nat. Biotechnol.">
        <title>The complete genome sequence of the meat-borne lactic acid bacterium Lactobacillus sakei 23K.</title>
        <authorList>
            <person name="Chaillou S."/>
            <person name="Champomier-Verges M.-C."/>
            <person name="Cornet M."/>
            <person name="Crutz-Le Coq A.-M."/>
            <person name="Dudez A.-M."/>
            <person name="Martin V."/>
            <person name="Beaufils S."/>
            <person name="Darbon-Rongere E."/>
            <person name="Bossy R."/>
            <person name="Loux V."/>
            <person name="Zagorec M."/>
        </authorList>
    </citation>
    <scope>NUCLEOTIDE SEQUENCE [LARGE SCALE GENOMIC DNA]</scope>
    <source>
        <strain>23K</strain>
    </source>
</reference>
<feature type="chain" id="PRO_1000201877" description="UPF0758 protein LCA_0852">
    <location>
        <begin position="1"/>
        <end position="224"/>
    </location>
</feature>
<feature type="domain" description="MPN" evidence="1">
    <location>
        <begin position="100"/>
        <end position="222"/>
    </location>
</feature>
<feature type="short sequence motif" description="JAMM motif" evidence="1">
    <location>
        <begin position="171"/>
        <end position="184"/>
    </location>
</feature>
<feature type="binding site" evidence="1">
    <location>
        <position position="171"/>
    </location>
    <ligand>
        <name>Zn(2+)</name>
        <dbReference type="ChEBI" id="CHEBI:29105"/>
        <note>catalytic</note>
    </ligand>
</feature>
<feature type="binding site" evidence="1">
    <location>
        <position position="173"/>
    </location>
    <ligand>
        <name>Zn(2+)</name>
        <dbReference type="ChEBI" id="CHEBI:29105"/>
        <note>catalytic</note>
    </ligand>
</feature>
<feature type="binding site" evidence="1">
    <location>
        <position position="184"/>
    </location>
    <ligand>
        <name>Zn(2+)</name>
        <dbReference type="ChEBI" id="CHEBI:29105"/>
        <note>catalytic</note>
    </ligand>
</feature>
<keyword id="KW-0378">Hydrolase</keyword>
<keyword id="KW-0479">Metal-binding</keyword>
<keyword id="KW-0482">Metalloprotease</keyword>
<keyword id="KW-0645">Protease</keyword>
<keyword id="KW-1185">Reference proteome</keyword>
<keyword id="KW-0862">Zinc</keyword>
<name>Y852_LATSS</name>
<gene>
    <name type="ordered locus">LCA_0852</name>
</gene>
<accession>Q38XC8</accession>
<organism>
    <name type="scientific">Latilactobacillus sakei subsp. sakei (strain 23K)</name>
    <name type="common">Lactobacillus sakei subsp. sakei</name>
    <dbReference type="NCBI Taxonomy" id="314315"/>
    <lineage>
        <taxon>Bacteria</taxon>
        <taxon>Bacillati</taxon>
        <taxon>Bacillota</taxon>
        <taxon>Bacilli</taxon>
        <taxon>Lactobacillales</taxon>
        <taxon>Lactobacillaceae</taxon>
        <taxon>Latilactobacillus</taxon>
    </lineage>
</organism>
<dbReference type="EMBL" id="CR936503">
    <property type="protein sequence ID" value="CAI55153.1"/>
    <property type="molecule type" value="Genomic_DNA"/>
</dbReference>
<dbReference type="SMR" id="Q38XC8"/>
<dbReference type="STRING" id="314315.LCA_0852"/>
<dbReference type="KEGG" id="lsa:LCA_0852"/>
<dbReference type="eggNOG" id="COG2003">
    <property type="taxonomic scope" value="Bacteria"/>
</dbReference>
<dbReference type="HOGENOM" id="CLU_073529_0_2_9"/>
<dbReference type="OrthoDB" id="9804482at2"/>
<dbReference type="Proteomes" id="UP000002707">
    <property type="component" value="Chromosome"/>
</dbReference>
<dbReference type="GO" id="GO:0046872">
    <property type="term" value="F:metal ion binding"/>
    <property type="evidence" value="ECO:0007669"/>
    <property type="project" value="UniProtKB-KW"/>
</dbReference>
<dbReference type="GO" id="GO:0008237">
    <property type="term" value="F:metallopeptidase activity"/>
    <property type="evidence" value="ECO:0007669"/>
    <property type="project" value="UniProtKB-KW"/>
</dbReference>
<dbReference type="GO" id="GO:0006508">
    <property type="term" value="P:proteolysis"/>
    <property type="evidence" value="ECO:0007669"/>
    <property type="project" value="UniProtKB-KW"/>
</dbReference>
<dbReference type="CDD" id="cd08071">
    <property type="entry name" value="MPN_DUF2466"/>
    <property type="match status" value="1"/>
</dbReference>
<dbReference type="Gene3D" id="1.10.150.20">
    <property type="entry name" value="5' to 3' exonuclease, C-terminal subdomain"/>
    <property type="match status" value="1"/>
</dbReference>
<dbReference type="Gene3D" id="3.40.140.10">
    <property type="entry name" value="Cytidine Deaminase, domain 2"/>
    <property type="match status" value="1"/>
</dbReference>
<dbReference type="InterPro" id="IPR037518">
    <property type="entry name" value="MPN"/>
</dbReference>
<dbReference type="InterPro" id="IPR025657">
    <property type="entry name" value="RadC_JAB"/>
</dbReference>
<dbReference type="InterPro" id="IPR010994">
    <property type="entry name" value="RuvA_2-like"/>
</dbReference>
<dbReference type="InterPro" id="IPR001405">
    <property type="entry name" value="UPF0758"/>
</dbReference>
<dbReference type="InterPro" id="IPR020891">
    <property type="entry name" value="UPF0758_CS"/>
</dbReference>
<dbReference type="InterPro" id="IPR046778">
    <property type="entry name" value="UPF0758_N"/>
</dbReference>
<dbReference type="NCBIfam" id="NF000642">
    <property type="entry name" value="PRK00024.1"/>
    <property type="match status" value="1"/>
</dbReference>
<dbReference type="NCBIfam" id="TIGR00608">
    <property type="entry name" value="radc"/>
    <property type="match status" value="1"/>
</dbReference>
<dbReference type="PANTHER" id="PTHR30471">
    <property type="entry name" value="DNA REPAIR PROTEIN RADC"/>
    <property type="match status" value="1"/>
</dbReference>
<dbReference type="PANTHER" id="PTHR30471:SF3">
    <property type="entry name" value="UPF0758 PROTEIN YEES-RELATED"/>
    <property type="match status" value="1"/>
</dbReference>
<dbReference type="Pfam" id="PF04002">
    <property type="entry name" value="RadC"/>
    <property type="match status" value="1"/>
</dbReference>
<dbReference type="Pfam" id="PF20582">
    <property type="entry name" value="UPF0758_N"/>
    <property type="match status" value="1"/>
</dbReference>
<dbReference type="SUPFAM" id="SSF47781">
    <property type="entry name" value="RuvA domain 2-like"/>
    <property type="match status" value="1"/>
</dbReference>
<dbReference type="PROSITE" id="PS50249">
    <property type="entry name" value="MPN"/>
    <property type="match status" value="1"/>
</dbReference>
<dbReference type="PROSITE" id="PS01302">
    <property type="entry name" value="UPF0758"/>
    <property type="match status" value="1"/>
</dbReference>
<evidence type="ECO:0000255" key="1">
    <source>
        <dbReference type="PROSITE-ProRule" id="PRU01182"/>
    </source>
</evidence>
<evidence type="ECO:0000305" key="2"/>
<proteinExistence type="inferred from homology"/>